<feature type="chain" id="PRO_0000349001" description="Heme A synthase">
    <location>
        <begin position="1"/>
        <end position="302"/>
    </location>
</feature>
<feature type="topological domain" description="Cytoplasmic" evidence="1">
    <location>
        <begin position="1"/>
        <end position="8"/>
    </location>
</feature>
<feature type="transmembrane region" description="Helical" evidence="1">
    <location>
        <begin position="9"/>
        <end position="29"/>
    </location>
</feature>
<feature type="topological domain" description="Extracellular" evidence="1">
    <location>
        <begin position="30"/>
        <end position="67"/>
    </location>
</feature>
<feature type="transmembrane region" description="Helical" evidence="1">
    <location>
        <begin position="68"/>
        <end position="88"/>
    </location>
</feature>
<feature type="topological domain" description="Cytoplasmic" evidence="1">
    <location>
        <begin position="89"/>
        <end position="93"/>
    </location>
</feature>
<feature type="transmembrane region" description="Helical" evidence="1">
    <location>
        <begin position="94"/>
        <end position="114"/>
    </location>
</feature>
<feature type="topological domain" description="Extracellular" evidence="1">
    <location>
        <begin position="115"/>
        <end position="125"/>
    </location>
</feature>
<feature type="transmembrane region" description="Helical" evidence="1">
    <location>
        <begin position="126"/>
        <end position="146"/>
    </location>
</feature>
<feature type="topological domain" description="Cytoplasmic" evidence="1">
    <location>
        <begin position="147"/>
        <end position="161"/>
    </location>
</feature>
<feature type="transmembrane region" description="Helical" evidence="1">
    <location>
        <begin position="162"/>
        <end position="182"/>
    </location>
</feature>
<feature type="topological domain" description="Extracellular" evidence="1">
    <location>
        <begin position="183"/>
        <end position="215"/>
    </location>
</feature>
<feature type="transmembrane region" description="Helical" evidence="1">
    <location>
        <begin position="216"/>
        <end position="236"/>
    </location>
</feature>
<feature type="topological domain" description="Cytoplasmic" evidence="1">
    <location>
        <begin position="237"/>
        <end position="244"/>
    </location>
</feature>
<feature type="transmembrane region" description="Helical" evidence="1">
    <location>
        <begin position="245"/>
        <end position="265"/>
    </location>
</feature>
<feature type="topological domain" description="Extracellular" evidence="1">
    <location>
        <begin position="266"/>
        <end position="270"/>
    </location>
</feature>
<feature type="transmembrane region" description="Helical" evidence="1">
    <location>
        <begin position="271"/>
        <end position="291"/>
    </location>
</feature>
<feature type="topological domain" description="Cytoplasmic" evidence="1">
    <location>
        <begin position="292"/>
        <end position="302"/>
    </location>
</feature>
<feature type="active site" evidence="1">
    <location>
        <position position="60"/>
    </location>
</feature>
<feature type="binding site" description="axial binding residue" evidence="1">
    <location>
        <position position="63"/>
    </location>
    <ligand>
        <name>heme o</name>
        <dbReference type="ChEBI" id="CHEBI:24480"/>
    </ligand>
    <ligandPart>
        <name>Fe</name>
        <dbReference type="ChEBI" id="CHEBI:18248"/>
    </ligandPart>
</feature>
<feature type="binding site" description="axial binding residue" evidence="1">
    <location>
        <position position="125"/>
    </location>
    <ligand>
        <name>heme o</name>
        <dbReference type="ChEBI" id="CHEBI:24480"/>
    </ligand>
    <ligandPart>
        <name>Fe</name>
        <dbReference type="ChEBI" id="CHEBI:18248"/>
    </ligandPart>
</feature>
<feature type="binding site" description="axial binding residue" evidence="1">
    <location>
        <position position="214"/>
    </location>
    <ligand>
        <name>heme b</name>
        <dbReference type="ChEBI" id="CHEBI:60344"/>
    </ligand>
    <ligandPart>
        <name>Fe</name>
        <dbReference type="ChEBI" id="CHEBI:18248"/>
    </ligandPart>
</feature>
<feature type="binding site" description="axial binding residue" evidence="1">
    <location>
        <position position="276"/>
    </location>
    <ligand>
        <name>heme b</name>
        <dbReference type="ChEBI" id="CHEBI:60344"/>
    </ligand>
    <ligandPart>
        <name>Fe</name>
        <dbReference type="ChEBI" id="CHEBI:18248"/>
    </ligandPart>
</feature>
<feature type="disulfide bond" description="Essential for catalytic activity" evidence="1">
    <location>
        <begin position="37"/>
        <end position="44"/>
    </location>
</feature>
<gene>
    <name evidence="1" type="primary">ctaA</name>
    <name type="ordered locus">SE_0814</name>
</gene>
<organism>
    <name type="scientific">Staphylococcus epidermidis (strain ATCC 12228 / FDA PCI 1200)</name>
    <dbReference type="NCBI Taxonomy" id="176280"/>
    <lineage>
        <taxon>Bacteria</taxon>
        <taxon>Bacillati</taxon>
        <taxon>Bacillota</taxon>
        <taxon>Bacilli</taxon>
        <taxon>Bacillales</taxon>
        <taxon>Staphylococcaceae</taxon>
        <taxon>Staphylococcus</taxon>
    </lineage>
</organism>
<evidence type="ECO:0000255" key="1">
    <source>
        <dbReference type="HAMAP-Rule" id="MF_01664"/>
    </source>
</evidence>
<name>CTAA_STAES</name>
<keyword id="KW-1003">Cell membrane</keyword>
<keyword id="KW-1015">Disulfide bond</keyword>
<keyword id="KW-0350">Heme biosynthesis</keyword>
<keyword id="KW-0408">Iron</keyword>
<keyword id="KW-0472">Membrane</keyword>
<keyword id="KW-0479">Metal-binding</keyword>
<keyword id="KW-0560">Oxidoreductase</keyword>
<keyword id="KW-0812">Transmembrane</keyword>
<keyword id="KW-1133">Transmembrane helix</keyword>
<dbReference type="EC" id="1.17.99.9" evidence="1"/>
<dbReference type="EMBL" id="AE015929">
    <property type="protein sequence ID" value="AAO04411.1"/>
    <property type="molecule type" value="Genomic_DNA"/>
</dbReference>
<dbReference type="RefSeq" id="NP_764369.1">
    <property type="nucleotide sequence ID" value="NC_004461.1"/>
</dbReference>
<dbReference type="RefSeq" id="WP_002470218.1">
    <property type="nucleotide sequence ID" value="NZ_WBME01000046.1"/>
</dbReference>
<dbReference type="SMR" id="Q8CPM2"/>
<dbReference type="DNASU" id="1057456"/>
<dbReference type="KEGG" id="sep:SE_0814"/>
<dbReference type="PATRIC" id="fig|176280.10.peg.789"/>
<dbReference type="eggNOG" id="COG1612">
    <property type="taxonomic scope" value="Bacteria"/>
</dbReference>
<dbReference type="HOGENOM" id="CLU_041525_3_1_9"/>
<dbReference type="OrthoDB" id="9816428at2"/>
<dbReference type="UniPathway" id="UPA00269">
    <property type="reaction ID" value="UER00713"/>
</dbReference>
<dbReference type="Proteomes" id="UP000001411">
    <property type="component" value="Chromosome"/>
</dbReference>
<dbReference type="GO" id="GO:0005886">
    <property type="term" value="C:plasma membrane"/>
    <property type="evidence" value="ECO:0007669"/>
    <property type="project" value="UniProtKB-SubCell"/>
</dbReference>
<dbReference type="GO" id="GO:0046872">
    <property type="term" value="F:metal ion binding"/>
    <property type="evidence" value="ECO:0007669"/>
    <property type="project" value="UniProtKB-KW"/>
</dbReference>
<dbReference type="GO" id="GO:0016653">
    <property type="term" value="F:oxidoreductase activity, acting on NAD(P)H, heme protein as acceptor"/>
    <property type="evidence" value="ECO:0007669"/>
    <property type="project" value="InterPro"/>
</dbReference>
<dbReference type="GO" id="GO:0006784">
    <property type="term" value="P:heme A biosynthetic process"/>
    <property type="evidence" value="ECO:0007669"/>
    <property type="project" value="UniProtKB-UniRule"/>
</dbReference>
<dbReference type="HAMAP" id="MF_01664">
    <property type="entry name" value="HemeA_synth_type1"/>
    <property type="match status" value="1"/>
</dbReference>
<dbReference type="InterPro" id="IPR003780">
    <property type="entry name" value="COX15/CtaA_fam"/>
</dbReference>
<dbReference type="InterPro" id="IPR050450">
    <property type="entry name" value="COX15/CtaA_HemeA_synthase"/>
</dbReference>
<dbReference type="InterPro" id="IPR023755">
    <property type="entry name" value="HemeA_Synthase_type1"/>
</dbReference>
<dbReference type="PANTHER" id="PTHR35457">
    <property type="entry name" value="HEME A SYNTHASE"/>
    <property type="match status" value="1"/>
</dbReference>
<dbReference type="PANTHER" id="PTHR35457:SF1">
    <property type="entry name" value="HEME A SYNTHASE"/>
    <property type="match status" value="1"/>
</dbReference>
<dbReference type="Pfam" id="PF02628">
    <property type="entry name" value="COX15-CtaA"/>
    <property type="match status" value="1"/>
</dbReference>
<sequence length="302" mass="33963">MFRKQNLKWLGVLATIIMTFVQLGGALVTKTGSEDGCGSSWPLCNGALLPENLPIQTIIELSHRAVSAISLIVVLWLVITAWKNIGYIKEIKPLSIISVGFLLVQALVGAAAVIWQQNPYVLALHFGISLISFSSVFLMTLIIFSIDKKYEADILFIHKPLRILTWLMAIIVYLTIYTGALVRHTKSSLAYGAWPIPFDDIVPHNAHDWVQFSHRGMAFITFIWIMITFIHAIKNYSDNRTVRYGYTASFILVILQVITGALSVITNVNLIIALFHALFITYLFGMIAYFILLMLRTTRSLK</sequence>
<proteinExistence type="inferred from homology"/>
<comment type="function">
    <text evidence="1">Catalyzes the conversion of heme O to heme A by two successive hydroxylations of the methyl group at C8. The first hydroxylation forms heme I, the second hydroxylation results in an unstable dihydroxymethyl group, which spontaneously dehydrates, resulting in the formyl group of heme A.</text>
</comment>
<comment type="catalytic activity">
    <reaction evidence="1">
        <text>Fe(II)-heme o + 2 A + H2O = Fe(II)-heme a + 2 AH2</text>
        <dbReference type="Rhea" id="RHEA:63388"/>
        <dbReference type="ChEBI" id="CHEBI:13193"/>
        <dbReference type="ChEBI" id="CHEBI:15377"/>
        <dbReference type="ChEBI" id="CHEBI:17499"/>
        <dbReference type="ChEBI" id="CHEBI:60530"/>
        <dbReference type="ChEBI" id="CHEBI:61715"/>
        <dbReference type="EC" id="1.17.99.9"/>
    </reaction>
    <physiologicalReaction direction="left-to-right" evidence="1">
        <dbReference type="Rhea" id="RHEA:63389"/>
    </physiologicalReaction>
</comment>
<comment type="cofactor">
    <cofactor evidence="1">
        <name>heme b</name>
        <dbReference type="ChEBI" id="CHEBI:60344"/>
    </cofactor>
</comment>
<comment type="pathway">
    <text evidence="1">Porphyrin-containing compound metabolism; heme A biosynthesis; heme A from heme O: step 1/1.</text>
</comment>
<comment type="subunit">
    <text evidence="1">Interacts with CtaB.</text>
</comment>
<comment type="subcellular location">
    <subcellularLocation>
        <location evidence="1">Cell membrane</location>
        <topology evidence="1">Multi-pass membrane protein</topology>
    </subcellularLocation>
</comment>
<comment type="domain">
    <text evidence="1">The N-half (TM1-TM4) and C-half (TM5-TM8) domains are connected by an intracellular loop. Each domain is formed from four-helix bundles and they align in a pseudo twofold symmetry manner. The N-half domain is the substrate-heme O binding domain and the C-half domain is the cofactor heme B binding domain.</text>
</comment>
<comment type="domain">
    <text evidence="1">The cysteines of disulfide bond Cys-37 and Cys-44 may be involved in transfer of reducing equivalents from quinol in the membrane to the active site of the enzyme.</text>
</comment>
<comment type="similarity">
    <text evidence="1">Belongs to the COX15/CtaA family. Type 1 subfamily.</text>
</comment>
<accession>Q8CPM2</accession>
<reference key="1">
    <citation type="journal article" date="2003" name="Mol. Microbiol.">
        <title>Genome-based analysis of virulence genes in a non-biofilm-forming Staphylococcus epidermidis strain (ATCC 12228).</title>
        <authorList>
            <person name="Zhang Y.-Q."/>
            <person name="Ren S.-X."/>
            <person name="Li H.-L."/>
            <person name="Wang Y.-X."/>
            <person name="Fu G."/>
            <person name="Yang J."/>
            <person name="Qin Z.-Q."/>
            <person name="Miao Y.-G."/>
            <person name="Wang W.-Y."/>
            <person name="Chen R.-S."/>
            <person name="Shen Y."/>
            <person name="Chen Z."/>
            <person name="Yuan Z.-H."/>
            <person name="Zhao G.-P."/>
            <person name="Qu D."/>
            <person name="Danchin A."/>
            <person name="Wen Y.-M."/>
        </authorList>
    </citation>
    <scope>NUCLEOTIDE SEQUENCE [LARGE SCALE GENOMIC DNA]</scope>
    <source>
        <strain>ATCC 12228 / FDA PCI 1200</strain>
    </source>
</reference>
<protein>
    <recommendedName>
        <fullName evidence="1">Heme A synthase</fullName>
        <shortName evidence="1">HAS</shortName>
        <ecNumber evidence="1">1.17.99.9</ecNumber>
    </recommendedName>
    <alternativeName>
        <fullName evidence="1">Cytochrome aa3-controlling protein</fullName>
    </alternativeName>
</protein>